<sequence length="625" mass="69467">MKKYDVVVIGGGHSGCEAAAAAARIGAKTLLITHSISTIGEMSCNPAIGGIAKGIVVREVDALDGLMGKVIDNASINSTILNRSKGPAVWGPRAQADRDLYRHAMQNSILNYPNLTVLEASVENFTTTDNQELPTINSVITADQEVIYTKKLILTTGTFLQGTIHIGSYNTPAGRFNEQSSVGLAKTLASYNFKLGRLRTGTPPRLDRNSINFSGLQEQKGDTPPSPFSYMSESINLPQISCYLTATNTKTHEVIKNNLHKAAASNLLKEIKAPRYCPSIEEKVRRFSERNSHQVFLEPEGLNSEIIYPNGITTSSPLDVQQTMLKTILGLENVKIVRSGYSVEYNFIDPRELYHTLETKKIRGLYCAGQINGTTGYEEAAGQGIIAGINAALSLNSNYEPFILKRNDAYIGVMIDDLVTLGTSEPYRLFTSRAEYRLRLRSDNADLRLTELGYKISAVSYQRYLTLNRKKEEVTKLTNILKETVILPSQLSQHGVCISQDGRKRSAFDLLSNPNINMNILSKICNQIKNYHANTIQQVEIEAKYAPYFIKQELDIQSFIAEENTHIPHDIEFSQIHGLSTEIQEKLQYMKPPSIGSARRIPGVTPAAITNILFYLRYHKNKKIL</sequence>
<comment type="function">
    <text evidence="1">NAD-binding protein involved in the addition of a carboxymethylaminomethyl (cmnm) group at the wobble position (U34) of certain tRNAs, forming tRNA-cmnm(5)s(2)U34.</text>
</comment>
<comment type="cofactor">
    <cofactor evidence="1">
        <name>FAD</name>
        <dbReference type="ChEBI" id="CHEBI:57692"/>
    </cofactor>
</comment>
<comment type="subunit">
    <text evidence="1">Homodimer. Heterotetramer of two MnmE and two MnmG subunits.</text>
</comment>
<comment type="subcellular location">
    <subcellularLocation>
        <location evidence="1">Cytoplasm</location>
    </subcellularLocation>
</comment>
<comment type="similarity">
    <text evidence="1">Belongs to the MnmG family.</text>
</comment>
<reference key="1">
    <citation type="journal article" date="2006" name="J. Bacteriol.">
        <title>Comparative genomic analysis of three strains of Ehrlichia ruminantium reveals an active process of genome size plasticity.</title>
        <authorList>
            <person name="Frutos R."/>
            <person name="Viari A."/>
            <person name="Ferraz C."/>
            <person name="Morgat A."/>
            <person name="Eychenie S."/>
            <person name="Kandassamy Y."/>
            <person name="Chantal I."/>
            <person name="Bensaid A."/>
            <person name="Coissac E."/>
            <person name="Vachiery N."/>
            <person name="Demaille J."/>
            <person name="Martinez D."/>
        </authorList>
    </citation>
    <scope>NUCLEOTIDE SEQUENCE [LARGE SCALE GENOMIC DNA]</scope>
    <source>
        <strain>Gardel</strain>
    </source>
</reference>
<dbReference type="EMBL" id="CR925677">
    <property type="protein sequence ID" value="CAI28120.1"/>
    <property type="molecule type" value="Genomic_DNA"/>
</dbReference>
<dbReference type="RefSeq" id="WP_011255757.1">
    <property type="nucleotide sequence ID" value="NC_006831.1"/>
</dbReference>
<dbReference type="SMR" id="Q5FFY7"/>
<dbReference type="KEGG" id="erg:ERGA_CDS_06680"/>
<dbReference type="HOGENOM" id="CLU_007831_2_2_5"/>
<dbReference type="OrthoDB" id="9815560at2"/>
<dbReference type="Proteomes" id="UP000000533">
    <property type="component" value="Chromosome"/>
</dbReference>
<dbReference type="GO" id="GO:0005737">
    <property type="term" value="C:cytoplasm"/>
    <property type="evidence" value="ECO:0007669"/>
    <property type="project" value="UniProtKB-SubCell"/>
</dbReference>
<dbReference type="GO" id="GO:0050660">
    <property type="term" value="F:flavin adenine dinucleotide binding"/>
    <property type="evidence" value="ECO:0007669"/>
    <property type="project" value="UniProtKB-UniRule"/>
</dbReference>
<dbReference type="GO" id="GO:0030488">
    <property type="term" value="P:tRNA methylation"/>
    <property type="evidence" value="ECO:0007669"/>
    <property type="project" value="TreeGrafter"/>
</dbReference>
<dbReference type="GO" id="GO:0002098">
    <property type="term" value="P:tRNA wobble uridine modification"/>
    <property type="evidence" value="ECO:0007669"/>
    <property type="project" value="InterPro"/>
</dbReference>
<dbReference type="FunFam" id="3.50.50.60:FF:000082">
    <property type="entry name" value="protein MTO1 homolog, mitochondrial isoform X1"/>
    <property type="match status" value="1"/>
</dbReference>
<dbReference type="FunFam" id="1.10.150.570:FF:000001">
    <property type="entry name" value="tRNA uridine 5-carboxymethylaminomethyl modification enzyme MnmG"/>
    <property type="match status" value="1"/>
</dbReference>
<dbReference type="FunFam" id="3.50.50.60:FF:000002">
    <property type="entry name" value="tRNA uridine 5-carboxymethylaminomethyl modification enzyme MnmG"/>
    <property type="match status" value="1"/>
</dbReference>
<dbReference type="Gene3D" id="3.50.50.60">
    <property type="entry name" value="FAD/NAD(P)-binding domain"/>
    <property type="match status" value="2"/>
</dbReference>
<dbReference type="Gene3D" id="1.10.150.570">
    <property type="entry name" value="GidA associated domain, C-terminal subdomain"/>
    <property type="match status" value="1"/>
</dbReference>
<dbReference type="Gene3D" id="1.10.10.1800">
    <property type="entry name" value="tRNA uridine 5-carboxymethylaminomethyl modification enzyme MnmG/GidA"/>
    <property type="match status" value="1"/>
</dbReference>
<dbReference type="HAMAP" id="MF_00129">
    <property type="entry name" value="MnmG_GidA"/>
    <property type="match status" value="1"/>
</dbReference>
<dbReference type="InterPro" id="IPR036188">
    <property type="entry name" value="FAD/NAD-bd_sf"/>
</dbReference>
<dbReference type="InterPro" id="IPR049312">
    <property type="entry name" value="GIDA_C_N"/>
</dbReference>
<dbReference type="InterPro" id="IPR004416">
    <property type="entry name" value="MnmG"/>
</dbReference>
<dbReference type="InterPro" id="IPR002218">
    <property type="entry name" value="MnmG-rel"/>
</dbReference>
<dbReference type="InterPro" id="IPR020595">
    <property type="entry name" value="MnmG-rel_CS"/>
</dbReference>
<dbReference type="InterPro" id="IPR026904">
    <property type="entry name" value="MnmG_C"/>
</dbReference>
<dbReference type="InterPro" id="IPR047001">
    <property type="entry name" value="MnmG_C_subdom"/>
</dbReference>
<dbReference type="InterPro" id="IPR044920">
    <property type="entry name" value="MnmG_C_subdom_sf"/>
</dbReference>
<dbReference type="InterPro" id="IPR040131">
    <property type="entry name" value="MnmG_N"/>
</dbReference>
<dbReference type="NCBIfam" id="TIGR00136">
    <property type="entry name" value="mnmG_gidA"/>
    <property type="match status" value="1"/>
</dbReference>
<dbReference type="PANTHER" id="PTHR11806">
    <property type="entry name" value="GLUCOSE INHIBITED DIVISION PROTEIN A"/>
    <property type="match status" value="1"/>
</dbReference>
<dbReference type="PANTHER" id="PTHR11806:SF0">
    <property type="entry name" value="PROTEIN MTO1 HOMOLOG, MITOCHONDRIAL"/>
    <property type="match status" value="1"/>
</dbReference>
<dbReference type="Pfam" id="PF01134">
    <property type="entry name" value="GIDA"/>
    <property type="match status" value="1"/>
</dbReference>
<dbReference type="Pfam" id="PF21680">
    <property type="entry name" value="GIDA_C_1st"/>
    <property type="match status" value="1"/>
</dbReference>
<dbReference type="Pfam" id="PF13932">
    <property type="entry name" value="SAM_GIDA_C"/>
    <property type="match status" value="1"/>
</dbReference>
<dbReference type="SMART" id="SM01228">
    <property type="entry name" value="GIDA_assoc_3"/>
    <property type="match status" value="1"/>
</dbReference>
<dbReference type="SUPFAM" id="SSF51905">
    <property type="entry name" value="FAD/NAD(P)-binding domain"/>
    <property type="match status" value="1"/>
</dbReference>
<dbReference type="PROSITE" id="PS01280">
    <property type="entry name" value="GIDA_1"/>
    <property type="match status" value="1"/>
</dbReference>
<dbReference type="PROSITE" id="PS01281">
    <property type="entry name" value="GIDA_2"/>
    <property type="match status" value="1"/>
</dbReference>
<organism>
    <name type="scientific">Ehrlichia ruminantium (strain Gardel)</name>
    <dbReference type="NCBI Taxonomy" id="302409"/>
    <lineage>
        <taxon>Bacteria</taxon>
        <taxon>Pseudomonadati</taxon>
        <taxon>Pseudomonadota</taxon>
        <taxon>Alphaproteobacteria</taxon>
        <taxon>Rickettsiales</taxon>
        <taxon>Anaplasmataceae</taxon>
        <taxon>Ehrlichia</taxon>
    </lineage>
</organism>
<feature type="chain" id="PRO_0000117095" description="tRNA uridine 5-carboxymethylaminomethyl modification enzyme MnmG">
    <location>
        <begin position="1"/>
        <end position="625"/>
    </location>
</feature>
<feature type="region of interest" description="Disordered" evidence="2">
    <location>
        <begin position="204"/>
        <end position="226"/>
    </location>
</feature>
<feature type="binding site" evidence="1">
    <location>
        <begin position="10"/>
        <end position="15"/>
    </location>
    <ligand>
        <name>FAD</name>
        <dbReference type="ChEBI" id="CHEBI:57692"/>
    </ligand>
</feature>
<feature type="binding site" evidence="1">
    <location>
        <position position="122"/>
    </location>
    <ligand>
        <name>FAD</name>
        <dbReference type="ChEBI" id="CHEBI:57692"/>
    </ligand>
</feature>
<feature type="binding site" evidence="1">
    <location>
        <position position="181"/>
    </location>
    <ligand>
        <name>FAD</name>
        <dbReference type="ChEBI" id="CHEBI:57692"/>
    </ligand>
</feature>
<feature type="binding site" evidence="1">
    <location>
        <begin position="273"/>
        <end position="287"/>
    </location>
    <ligand>
        <name>NAD(+)</name>
        <dbReference type="ChEBI" id="CHEBI:57540"/>
    </ligand>
</feature>
<feature type="binding site" evidence="1">
    <location>
        <position position="370"/>
    </location>
    <ligand>
        <name>FAD</name>
        <dbReference type="ChEBI" id="CHEBI:57692"/>
    </ligand>
</feature>
<keyword id="KW-0963">Cytoplasm</keyword>
<keyword id="KW-0274">FAD</keyword>
<keyword id="KW-0285">Flavoprotein</keyword>
<keyword id="KW-0520">NAD</keyword>
<keyword id="KW-0819">tRNA processing</keyword>
<evidence type="ECO:0000255" key="1">
    <source>
        <dbReference type="HAMAP-Rule" id="MF_00129"/>
    </source>
</evidence>
<evidence type="ECO:0000256" key="2">
    <source>
        <dbReference type="SAM" id="MobiDB-lite"/>
    </source>
</evidence>
<gene>
    <name evidence="1" type="primary">mnmG</name>
    <name evidence="1" type="synonym">gidA</name>
    <name type="ordered locus">ERGA_CDS_06680</name>
</gene>
<accession>Q5FFY7</accession>
<protein>
    <recommendedName>
        <fullName evidence="1">tRNA uridine 5-carboxymethylaminomethyl modification enzyme MnmG</fullName>
    </recommendedName>
    <alternativeName>
        <fullName evidence="1">Glucose-inhibited division protein A</fullName>
    </alternativeName>
</protein>
<name>MNMG_EHRRG</name>
<proteinExistence type="inferred from homology"/>